<accession>A0RK86</accession>
<gene>
    <name evidence="1" type="primary">glgC</name>
    <name type="ordered locus">BALH_4431</name>
</gene>
<sequence>MAQKQKCVAMLLAGGKGSRLSALTKNLAKPAVPFGGKYRIIDFTLSNCANSGIETVGILTQYQPLELHNYIGIGNAWDLDRVSGGVTVLPPYAESSGVKWYTGTASAIYQNLNYLSQYEPDYVLILSGDHIYKMDYSKMLDYHIEKEADVSISVIEVPWDEASRFGIMNTNEEMEIVEFEEKPQFPRSNLASMGIYIFNWAILKEYLEMDARNPESSNDFGKDVLPLLLDEGKKLMAYPFEGYWKDVGTVKSLWEANMDLLRDETSLNLNDRDWRIYSVNPNEPPQYIAEKAKVEESLINEGCVIEGDVKHSVLFQGVTVEEGSMVIDSVVMPGAKIGKNVVIERAIVGSEMVIEDGTIIRPEKNVDDVVLIAEGK</sequence>
<reference key="1">
    <citation type="journal article" date="2007" name="J. Bacteriol.">
        <title>The complete genome sequence of Bacillus thuringiensis Al Hakam.</title>
        <authorList>
            <person name="Challacombe J.F."/>
            <person name="Altherr M.R."/>
            <person name="Xie G."/>
            <person name="Bhotika S.S."/>
            <person name="Brown N."/>
            <person name="Bruce D."/>
            <person name="Campbell C.S."/>
            <person name="Campbell M.L."/>
            <person name="Chen J."/>
            <person name="Chertkov O."/>
            <person name="Cleland C."/>
            <person name="Dimitrijevic M."/>
            <person name="Doggett N.A."/>
            <person name="Fawcett J.J."/>
            <person name="Glavina T."/>
            <person name="Goodwin L.A."/>
            <person name="Green L.D."/>
            <person name="Han C.S."/>
            <person name="Hill K.K."/>
            <person name="Hitchcock P."/>
            <person name="Jackson P.J."/>
            <person name="Keim P."/>
            <person name="Kewalramani A.R."/>
            <person name="Longmire J."/>
            <person name="Lucas S."/>
            <person name="Malfatti S."/>
            <person name="Martinez D."/>
            <person name="McMurry K."/>
            <person name="Meincke L.J."/>
            <person name="Misra M."/>
            <person name="Moseman B.L."/>
            <person name="Mundt M."/>
            <person name="Munk A.C."/>
            <person name="Okinaka R.T."/>
            <person name="Parson-Quintana B."/>
            <person name="Reilly L.P."/>
            <person name="Richardson P."/>
            <person name="Robinson D.L."/>
            <person name="Saunders E."/>
            <person name="Tapia R."/>
            <person name="Tesmer J.G."/>
            <person name="Thayer N."/>
            <person name="Thompson L.S."/>
            <person name="Tice H."/>
            <person name="Ticknor L.O."/>
            <person name="Wills P.L."/>
            <person name="Gilna P."/>
            <person name="Brettin T.S."/>
        </authorList>
    </citation>
    <scope>NUCLEOTIDE SEQUENCE [LARGE SCALE GENOMIC DNA]</scope>
    <source>
        <strain>Al Hakam</strain>
    </source>
</reference>
<protein>
    <recommendedName>
        <fullName evidence="1">Glucose-1-phosphate adenylyltransferase</fullName>
        <ecNumber evidence="1">2.7.7.27</ecNumber>
    </recommendedName>
    <alternativeName>
        <fullName evidence="1">ADP-glucose pyrophosphorylase</fullName>
        <shortName evidence="1">ADPGlc PPase</shortName>
    </alternativeName>
    <alternativeName>
        <fullName evidence="1">ADP-glucose synthase</fullName>
    </alternativeName>
</protein>
<dbReference type="EC" id="2.7.7.27" evidence="1"/>
<dbReference type="EMBL" id="CP000485">
    <property type="protein sequence ID" value="ABK87629.1"/>
    <property type="molecule type" value="Genomic_DNA"/>
</dbReference>
<dbReference type="RefSeq" id="WP_000057610.1">
    <property type="nucleotide sequence ID" value="NC_008600.1"/>
</dbReference>
<dbReference type="SMR" id="A0RK86"/>
<dbReference type="KEGG" id="btl:BALH_4431"/>
<dbReference type="HOGENOM" id="CLU_029499_14_0_9"/>
<dbReference type="UniPathway" id="UPA00164"/>
<dbReference type="GO" id="GO:0005524">
    <property type="term" value="F:ATP binding"/>
    <property type="evidence" value="ECO:0007669"/>
    <property type="project" value="UniProtKB-KW"/>
</dbReference>
<dbReference type="GO" id="GO:0008878">
    <property type="term" value="F:glucose-1-phosphate adenylyltransferase activity"/>
    <property type="evidence" value="ECO:0007669"/>
    <property type="project" value="UniProtKB-UniRule"/>
</dbReference>
<dbReference type="GO" id="GO:0005978">
    <property type="term" value="P:glycogen biosynthetic process"/>
    <property type="evidence" value="ECO:0007669"/>
    <property type="project" value="UniProtKB-UniRule"/>
</dbReference>
<dbReference type="CDD" id="cd02508">
    <property type="entry name" value="ADP_Glucose_PP"/>
    <property type="match status" value="1"/>
</dbReference>
<dbReference type="CDD" id="cd04651">
    <property type="entry name" value="LbH_G1P_AT_C"/>
    <property type="match status" value="1"/>
</dbReference>
<dbReference type="FunFam" id="2.160.10.10:FF:000022">
    <property type="entry name" value="Glucose-1-phosphate adenylyltransferase"/>
    <property type="match status" value="1"/>
</dbReference>
<dbReference type="FunFam" id="3.90.550.10:FF:000083">
    <property type="entry name" value="Glucose-1-phosphate adenylyltransferase"/>
    <property type="match status" value="1"/>
</dbReference>
<dbReference type="Gene3D" id="2.160.10.10">
    <property type="entry name" value="Hexapeptide repeat proteins"/>
    <property type="match status" value="1"/>
</dbReference>
<dbReference type="Gene3D" id="3.90.550.10">
    <property type="entry name" value="Spore Coat Polysaccharide Biosynthesis Protein SpsA, Chain A"/>
    <property type="match status" value="1"/>
</dbReference>
<dbReference type="HAMAP" id="MF_00624">
    <property type="entry name" value="GlgC"/>
    <property type="match status" value="1"/>
</dbReference>
<dbReference type="InterPro" id="IPR011831">
    <property type="entry name" value="ADP-Glc_PPase"/>
</dbReference>
<dbReference type="InterPro" id="IPR005836">
    <property type="entry name" value="ADP_Glu_pyroP_CS"/>
</dbReference>
<dbReference type="InterPro" id="IPR023049">
    <property type="entry name" value="GlgC_bac"/>
</dbReference>
<dbReference type="InterPro" id="IPR056818">
    <property type="entry name" value="GlmU/GlgC-like_hexapep"/>
</dbReference>
<dbReference type="InterPro" id="IPR005835">
    <property type="entry name" value="NTP_transferase_dom"/>
</dbReference>
<dbReference type="InterPro" id="IPR029044">
    <property type="entry name" value="Nucleotide-diphossugar_trans"/>
</dbReference>
<dbReference type="InterPro" id="IPR011004">
    <property type="entry name" value="Trimer_LpxA-like_sf"/>
</dbReference>
<dbReference type="NCBIfam" id="TIGR02091">
    <property type="entry name" value="glgC"/>
    <property type="match status" value="1"/>
</dbReference>
<dbReference type="NCBIfam" id="NF003670">
    <property type="entry name" value="PRK05293.1"/>
    <property type="match status" value="1"/>
</dbReference>
<dbReference type="PANTHER" id="PTHR43523:SF2">
    <property type="entry name" value="GLUCOSE-1-PHOSPHATE ADENYLYLTRANSFERASE"/>
    <property type="match status" value="1"/>
</dbReference>
<dbReference type="PANTHER" id="PTHR43523">
    <property type="entry name" value="GLUCOSE-1-PHOSPHATE ADENYLYLTRANSFERASE-RELATED"/>
    <property type="match status" value="1"/>
</dbReference>
<dbReference type="Pfam" id="PF24894">
    <property type="entry name" value="Hexapep_GlmU"/>
    <property type="match status" value="1"/>
</dbReference>
<dbReference type="Pfam" id="PF00483">
    <property type="entry name" value="NTP_transferase"/>
    <property type="match status" value="1"/>
</dbReference>
<dbReference type="SUPFAM" id="SSF53448">
    <property type="entry name" value="Nucleotide-diphospho-sugar transferases"/>
    <property type="match status" value="1"/>
</dbReference>
<dbReference type="SUPFAM" id="SSF51161">
    <property type="entry name" value="Trimeric LpxA-like enzymes"/>
    <property type="match status" value="1"/>
</dbReference>
<dbReference type="PROSITE" id="PS00808">
    <property type="entry name" value="ADP_GLC_PYROPHOSPH_1"/>
    <property type="match status" value="1"/>
</dbReference>
<dbReference type="PROSITE" id="PS00809">
    <property type="entry name" value="ADP_GLC_PYROPHOSPH_2"/>
    <property type="match status" value="1"/>
</dbReference>
<comment type="function">
    <text evidence="1">Involved in the biosynthesis of ADP-glucose, a building block required for the elongation reactions to produce glycogen. Catalyzes the reaction between ATP and alpha-D-glucose 1-phosphate (G1P) to produce pyrophosphate and ADP-Glc.</text>
</comment>
<comment type="catalytic activity">
    <reaction evidence="1">
        <text>alpha-D-glucose 1-phosphate + ATP + H(+) = ADP-alpha-D-glucose + diphosphate</text>
        <dbReference type="Rhea" id="RHEA:12120"/>
        <dbReference type="ChEBI" id="CHEBI:15378"/>
        <dbReference type="ChEBI" id="CHEBI:30616"/>
        <dbReference type="ChEBI" id="CHEBI:33019"/>
        <dbReference type="ChEBI" id="CHEBI:57498"/>
        <dbReference type="ChEBI" id="CHEBI:58601"/>
        <dbReference type="EC" id="2.7.7.27"/>
    </reaction>
</comment>
<comment type="pathway">
    <text evidence="1">Glycan biosynthesis; glycogen biosynthesis.</text>
</comment>
<comment type="subunit">
    <text evidence="1">Homotetramer.</text>
</comment>
<comment type="similarity">
    <text evidence="1">Belongs to the bacterial/plant glucose-1-phosphate adenylyltransferase family.</text>
</comment>
<feature type="chain" id="PRO_1000051559" description="Glucose-1-phosphate adenylyltransferase">
    <location>
        <begin position="1"/>
        <end position="376"/>
    </location>
</feature>
<feature type="binding site" evidence="1">
    <location>
        <position position="101"/>
    </location>
    <ligand>
        <name>alpha-D-glucose 1-phosphate</name>
        <dbReference type="ChEBI" id="CHEBI:58601"/>
    </ligand>
</feature>
<feature type="binding site" evidence="1">
    <location>
        <position position="166"/>
    </location>
    <ligand>
        <name>alpha-D-glucose 1-phosphate</name>
        <dbReference type="ChEBI" id="CHEBI:58601"/>
    </ligand>
</feature>
<feature type="binding site" evidence="1">
    <location>
        <begin position="181"/>
        <end position="182"/>
    </location>
    <ligand>
        <name>alpha-D-glucose 1-phosphate</name>
        <dbReference type="ChEBI" id="CHEBI:58601"/>
    </ligand>
</feature>
<feature type="binding site" evidence="1">
    <location>
        <position position="192"/>
    </location>
    <ligand>
        <name>alpha-D-glucose 1-phosphate</name>
        <dbReference type="ChEBI" id="CHEBI:58601"/>
    </ligand>
</feature>
<organism>
    <name type="scientific">Bacillus thuringiensis (strain Al Hakam)</name>
    <dbReference type="NCBI Taxonomy" id="412694"/>
    <lineage>
        <taxon>Bacteria</taxon>
        <taxon>Bacillati</taxon>
        <taxon>Bacillota</taxon>
        <taxon>Bacilli</taxon>
        <taxon>Bacillales</taxon>
        <taxon>Bacillaceae</taxon>
        <taxon>Bacillus</taxon>
        <taxon>Bacillus cereus group</taxon>
    </lineage>
</organism>
<name>GLGC_BACAH</name>
<proteinExistence type="inferred from homology"/>
<keyword id="KW-0067">ATP-binding</keyword>
<keyword id="KW-0119">Carbohydrate metabolism</keyword>
<keyword id="KW-0320">Glycogen biosynthesis</keyword>
<keyword id="KW-0321">Glycogen metabolism</keyword>
<keyword id="KW-0547">Nucleotide-binding</keyword>
<keyword id="KW-0548">Nucleotidyltransferase</keyword>
<keyword id="KW-0808">Transferase</keyword>
<evidence type="ECO:0000255" key="1">
    <source>
        <dbReference type="HAMAP-Rule" id="MF_00624"/>
    </source>
</evidence>